<organism>
    <name type="scientific">Homo sapiens</name>
    <name type="common">Human</name>
    <dbReference type="NCBI Taxonomy" id="9606"/>
    <lineage>
        <taxon>Eukaryota</taxon>
        <taxon>Metazoa</taxon>
        <taxon>Chordata</taxon>
        <taxon>Craniata</taxon>
        <taxon>Vertebrata</taxon>
        <taxon>Euteleostomi</taxon>
        <taxon>Mammalia</taxon>
        <taxon>Eutheria</taxon>
        <taxon>Euarchontoglires</taxon>
        <taxon>Primates</taxon>
        <taxon>Haplorrhini</taxon>
        <taxon>Catarrhini</taxon>
        <taxon>Hominidae</taxon>
        <taxon>Homo</taxon>
    </lineage>
</organism>
<feature type="chain" id="PRO_0000186070" description="Histone-lysine N-methyltransferase, H3 lysine-36 specific">
    <location>
        <begin position="1"/>
        <end position="2696"/>
    </location>
</feature>
<feature type="domain" description="PWWP 1" evidence="5">
    <location>
        <begin position="323"/>
        <end position="388"/>
    </location>
</feature>
<feature type="domain" description="PWWP 2" evidence="5">
    <location>
        <begin position="1756"/>
        <end position="1818"/>
    </location>
</feature>
<feature type="domain" description="AWS" evidence="7">
    <location>
        <begin position="1890"/>
        <end position="1940"/>
    </location>
</feature>
<feature type="domain" description="SET" evidence="6">
    <location>
        <begin position="1942"/>
        <end position="2059"/>
    </location>
</feature>
<feature type="domain" description="Post-SET" evidence="4">
    <location>
        <begin position="2066"/>
        <end position="2082"/>
    </location>
</feature>
<feature type="zinc finger region" description="PHD-type 1" evidence="3">
    <location>
        <begin position="1543"/>
        <end position="1589"/>
    </location>
</feature>
<feature type="zinc finger region" description="PHD-type 2" evidence="3">
    <location>
        <begin position="1590"/>
        <end position="1646"/>
    </location>
</feature>
<feature type="zinc finger region" description="PHD-type 3" evidence="3">
    <location>
        <begin position="1707"/>
        <end position="1751"/>
    </location>
</feature>
<feature type="zinc finger region" description="PHD-type 4; atypical" evidence="3">
    <location>
        <begin position="2118"/>
        <end position="2165"/>
    </location>
</feature>
<feature type="region of interest" description="Disordered" evidence="8">
    <location>
        <begin position="207"/>
        <end position="252"/>
    </location>
</feature>
<feature type="region of interest" description="Disordered" evidence="8">
    <location>
        <begin position="281"/>
        <end position="311"/>
    </location>
</feature>
<feature type="region of interest" description="Disordered" evidence="8">
    <location>
        <begin position="487"/>
        <end position="514"/>
    </location>
</feature>
<feature type="region of interest" description="Disordered" evidence="8">
    <location>
        <begin position="872"/>
        <end position="891"/>
    </location>
</feature>
<feature type="region of interest" description="Disordered" evidence="8">
    <location>
        <begin position="936"/>
        <end position="1035"/>
    </location>
</feature>
<feature type="region of interest" description="Disordered" evidence="8">
    <location>
        <begin position="1067"/>
        <end position="1093"/>
    </location>
</feature>
<feature type="region of interest" description="Disordered" evidence="8">
    <location>
        <begin position="1112"/>
        <end position="1134"/>
    </location>
</feature>
<feature type="region of interest" description="Disordered" evidence="8">
    <location>
        <begin position="1243"/>
        <end position="1272"/>
    </location>
</feature>
<feature type="region of interest" description="Disordered" evidence="8">
    <location>
        <begin position="1294"/>
        <end position="1344"/>
    </location>
</feature>
<feature type="region of interest" description="Disordered" evidence="8">
    <location>
        <begin position="1382"/>
        <end position="1428"/>
    </location>
</feature>
<feature type="region of interest" description="Disordered" evidence="8">
    <location>
        <begin position="1480"/>
        <end position="1534"/>
    </location>
</feature>
<feature type="region of interest" description="Inhibits enzyme activity in the absence of bound histone">
    <location>
        <begin position="2060"/>
        <end position="2066"/>
    </location>
</feature>
<feature type="region of interest" description="Disordered" evidence="8">
    <location>
        <begin position="2091"/>
        <end position="2111"/>
    </location>
</feature>
<feature type="region of interest" description="Disordered" evidence="8">
    <location>
        <begin position="2213"/>
        <end position="2422"/>
    </location>
</feature>
<feature type="region of interest" description="Disordered" evidence="8">
    <location>
        <begin position="2464"/>
        <end position="2499"/>
    </location>
</feature>
<feature type="region of interest" description="Disordered" evidence="8">
    <location>
        <begin position="2553"/>
        <end position="2575"/>
    </location>
</feature>
<feature type="region of interest" description="Disordered" evidence="8">
    <location>
        <begin position="2595"/>
        <end position="2616"/>
    </location>
</feature>
<feature type="region of interest" description="Disordered" evidence="8">
    <location>
        <begin position="2665"/>
        <end position="2696"/>
    </location>
</feature>
<feature type="compositionally biased region" description="Basic and acidic residues" evidence="8">
    <location>
        <begin position="236"/>
        <end position="248"/>
    </location>
</feature>
<feature type="compositionally biased region" description="Polar residues" evidence="8">
    <location>
        <begin position="281"/>
        <end position="290"/>
    </location>
</feature>
<feature type="compositionally biased region" description="Polar residues" evidence="8">
    <location>
        <begin position="297"/>
        <end position="306"/>
    </location>
</feature>
<feature type="compositionally biased region" description="Low complexity" evidence="8">
    <location>
        <begin position="948"/>
        <end position="961"/>
    </location>
</feature>
<feature type="compositionally biased region" description="Polar residues" evidence="8">
    <location>
        <begin position="971"/>
        <end position="982"/>
    </location>
</feature>
<feature type="compositionally biased region" description="Basic and acidic residues" evidence="8">
    <location>
        <begin position="1000"/>
        <end position="1017"/>
    </location>
</feature>
<feature type="compositionally biased region" description="Basic and acidic residues" evidence="8">
    <location>
        <begin position="1070"/>
        <end position="1090"/>
    </location>
</feature>
<feature type="compositionally biased region" description="Basic and acidic residues" evidence="8">
    <location>
        <begin position="1112"/>
        <end position="1124"/>
    </location>
</feature>
<feature type="compositionally biased region" description="Basic and acidic residues" evidence="8">
    <location>
        <begin position="1300"/>
        <end position="1314"/>
    </location>
</feature>
<feature type="compositionally biased region" description="Polar residues" evidence="8">
    <location>
        <begin position="1323"/>
        <end position="1337"/>
    </location>
</feature>
<feature type="compositionally biased region" description="Basic and acidic residues" evidence="8">
    <location>
        <begin position="1513"/>
        <end position="1523"/>
    </location>
</feature>
<feature type="compositionally biased region" description="Basic residues" evidence="8">
    <location>
        <begin position="2097"/>
        <end position="2108"/>
    </location>
</feature>
<feature type="compositionally biased region" description="Pro residues" evidence="8">
    <location>
        <begin position="2222"/>
        <end position="2232"/>
    </location>
</feature>
<feature type="compositionally biased region" description="Basic and acidic residues" evidence="8">
    <location>
        <begin position="2281"/>
        <end position="2298"/>
    </location>
</feature>
<feature type="compositionally biased region" description="Polar residues" evidence="8">
    <location>
        <begin position="2303"/>
        <end position="2314"/>
    </location>
</feature>
<feature type="compositionally biased region" description="Low complexity" evidence="8">
    <location>
        <begin position="2330"/>
        <end position="2348"/>
    </location>
</feature>
<feature type="compositionally biased region" description="Polar residues" evidence="8">
    <location>
        <begin position="2371"/>
        <end position="2381"/>
    </location>
</feature>
<feature type="compositionally biased region" description="Polar residues" evidence="8">
    <location>
        <begin position="2394"/>
        <end position="2404"/>
    </location>
</feature>
<feature type="compositionally biased region" description="Polar residues" evidence="8">
    <location>
        <begin position="2674"/>
        <end position="2686"/>
    </location>
</feature>
<feature type="binding site">
    <location>
        <begin position="1952"/>
        <end position="1954"/>
    </location>
    <ligand>
        <name>S-adenosyl-L-methionine</name>
        <dbReference type="ChEBI" id="CHEBI:59789"/>
    </ligand>
</feature>
<feature type="binding site">
    <location>
        <begin position="1994"/>
        <end position="1997"/>
    </location>
    <ligand>
        <name>S-adenosyl-L-methionine</name>
        <dbReference type="ChEBI" id="CHEBI:59789"/>
    </ligand>
</feature>
<feature type="binding site">
    <location>
        <begin position="2020"/>
        <end position="2021"/>
    </location>
    <ligand>
        <name>S-adenosyl-L-methionine</name>
        <dbReference type="ChEBI" id="CHEBI:59789"/>
    </ligand>
</feature>
<feature type="binding site" evidence="6 16">
    <location>
        <position position="2065"/>
    </location>
    <ligand>
        <name>S-adenosyl-L-methionine</name>
        <dbReference type="ChEBI" id="CHEBI:59789"/>
    </ligand>
</feature>
<feature type="binding site" evidence="6 16">
    <location>
        <position position="2071"/>
    </location>
    <ligand>
        <name>S-adenosyl-L-methionine</name>
        <dbReference type="ChEBI" id="CHEBI:59789"/>
    </ligand>
</feature>
<feature type="modified residue" description="Phosphoserine" evidence="2">
    <location>
        <position position="117"/>
    </location>
</feature>
<feature type="modified residue" description="Phosphoserine" evidence="23 24">
    <location>
        <position position="483"/>
    </location>
</feature>
<feature type="modified residue" description="Phosphoserine" evidence="23 24">
    <location>
        <position position="486"/>
    </location>
</feature>
<feature type="modified residue" description="Phosphoserine" evidence="20">
    <location>
        <position position="766"/>
    </location>
</feature>
<feature type="modified residue" description="Phosphoserine" evidence="2">
    <location>
        <position position="1510"/>
    </location>
</feature>
<feature type="modified residue" description="Phosphoserine" evidence="24">
    <location>
        <position position="2369"/>
    </location>
</feature>
<feature type="modified residue" description="Phosphothreonine" evidence="22">
    <location>
        <position position="2462"/>
    </location>
</feature>
<feature type="modified residue" description="Phosphoserine" evidence="21 24">
    <location>
        <position position="2471"/>
    </location>
</feature>
<feature type="cross-link" description="Glycyl lysine isopeptide (Lys-Gly) (interchain with G-Cter in SUMO2)" evidence="26">
    <location>
        <position position="906"/>
    </location>
</feature>
<feature type="cross-link" description="Glycyl lysine isopeptide (Lys-Gly) (interchain with G-Cter in SUMO2)" evidence="26">
    <location>
        <position position="1339"/>
    </location>
</feature>
<feature type="cross-link" description="Glycyl lysine isopeptide (Lys-Gly) (interchain with G-Cter in SUMO2)" evidence="25">
    <location>
        <position position="2616"/>
    </location>
</feature>
<feature type="splice variant" id="VSP_007682" description="In isoform 2." evidence="18">
    <location>
        <begin position="1"/>
        <end position="269"/>
    </location>
</feature>
<feature type="splice variant" id="VSP_007683" description="In isoform 2." evidence="18">
    <original>QLNSINLSFQ</original>
    <variation>MPLKTRTALS</variation>
    <location>
        <begin position="270"/>
        <end position="279"/>
    </location>
</feature>
<feature type="splice variant" id="VSP_007684" description="In isoform 3." evidence="17">
    <location>
        <begin position="310"/>
        <end position="412"/>
    </location>
</feature>
<feature type="sequence variant" id="VAR_015775" description="In dbSNP:rs3733875." evidence="11">
    <original>V</original>
    <variation>L</variation>
    <location>
        <position position="614"/>
    </location>
</feature>
<feature type="sequence variant" id="VAR_015776" description="In dbSNP:rs28932177." evidence="11">
    <original>A</original>
    <variation>T</variation>
    <location>
        <position position="691"/>
    </location>
</feature>
<feature type="sequence variant" id="VAR_015777" description="In dbSNP:rs28932178." evidence="11 15">
    <original>S</original>
    <variation>P</variation>
    <location>
        <position position="726"/>
    </location>
</feature>
<feature type="sequence variant" id="VAR_015778" description="In dbSNP:rs28932179." evidence="11">
    <original>A</original>
    <variation>P</variation>
    <location>
        <position position="1036"/>
    </location>
</feature>
<feature type="sequence variant" id="VAR_015779" description="In dbSNP:rs35597015." evidence="11">
    <original>L</original>
    <variation>I</variation>
    <location>
        <position position="1091"/>
    </location>
</feature>
<feature type="sequence variant" id="VAR_015780" description="In SOTOS." evidence="11">
    <original>H</original>
    <variation>L</variation>
    <location>
        <position position="1616"/>
    </location>
</feature>
<feature type="sequence variant" id="VAR_015781" description="In SOTOS." evidence="11">
    <original>L</original>
    <variation>P</variation>
    <location>
        <position position="1637"/>
    </location>
</feature>
<feature type="sequence variant" id="VAR_015782" description="In SOTOS." evidence="11">
    <original>C</original>
    <variation>W</variation>
    <location>
        <position position="1674"/>
    </location>
</feature>
<feature type="sequence variant" id="VAR_015783" description="In SOTOS." evidence="12">
    <original>I</original>
    <variation>N</variation>
    <location>
        <position position="1687"/>
    </location>
</feature>
<feature type="sequence variant" id="VAR_015784" description="In SOTOS." evidence="11">
    <original>G</original>
    <variation>V</variation>
    <location>
        <position position="1792"/>
    </location>
</feature>
<feature type="sequence variant" id="VAR_015785" description="In SOTOS." evidence="11">
    <original>C</original>
    <variation>R</variation>
    <location>
        <position position="1925"/>
    </location>
</feature>
<feature type="sequence variant" id="VAR_015786" description="In SOTOS; dbSNP:rs2127257596." evidence="12">
    <original>G</original>
    <variation>D</variation>
    <location>
        <position position="1955"/>
    </location>
</feature>
<feature type="sequence variant" id="VAR_015787" description="In SOTOS; loss of enzyme activity; dbSNP:rs587784169." evidence="12 16">
    <original>R</original>
    <variation>Q</variation>
    <location>
        <position position="1984"/>
    </location>
</feature>
<feature type="sequence variant" id="VAR_015788" description="In SOTOS; dbSNP:rs797045825." evidence="12">
    <original>Y</original>
    <variation>C</variation>
    <location>
        <position position="1997"/>
    </location>
</feature>
<feature type="sequence variant" id="VAR_015789" description="In SOTOS; strongly reduced enzyme activity; dbSNP:rs587784174." evidence="11 16">
    <original>R</original>
    <variation>Q</variation>
    <location>
        <position position="2005"/>
    </location>
</feature>
<feature type="sequence variant" id="VAR_015790" description="In SOTOS; loss of enzyme activity; dbSNP:rs587784177." evidence="11 16">
    <original>R</original>
    <variation>Q</variation>
    <location>
        <position position="2017"/>
    </location>
</feature>
<feature type="sequence variant" id="VAR_015791" description="In SOTOS; dbSNP:rs587784176." evidence="12">
    <original>R</original>
    <variation>W</variation>
    <location>
        <position position="2017"/>
    </location>
</feature>
<feature type="sequence variant" id="VAR_015792" description="In SOTOS; dbSNP:rs121908068." evidence="11">
    <original>H</original>
    <variation>Q</variation>
    <location>
        <position position="2143"/>
    </location>
</feature>
<feature type="sequence variant" id="VAR_015793" description="In SOTOS; dbSNP:rs121908069." evidence="11">
    <original>C</original>
    <variation>S</variation>
    <location>
        <position position="2183"/>
    </location>
</feature>
<feature type="sequence variant" id="VAR_015794" description="In dbSNP:rs35848863." evidence="11">
    <original>M</original>
    <variation>I</variation>
    <location>
        <position position="2250"/>
    </location>
</feature>
<feature type="sequence variant" id="VAR_015795" description="In dbSNP:rs34165241." evidence="11">
    <original>M</original>
    <variation>T</variation>
    <location>
        <position position="2261"/>
    </location>
</feature>
<feature type="mutagenesis site" description="Reduced enzyme activity." evidence="16">
    <original>R</original>
    <variation>C</variation>
    <location>
        <position position="1914"/>
    </location>
</feature>
<feature type="mutagenesis site" description="Nearly abolished enzyme activity." evidence="16">
    <original>R</original>
    <variation>W</variation>
    <location>
        <position position="1952"/>
    </location>
</feature>
<feature type="sequence conflict" description="In Ref. 3; AAK92049." evidence="19" ref="3">
    <original>H</original>
    <variation>D</variation>
    <location>
        <position position="1306"/>
    </location>
</feature>
<feature type="sequence conflict" description="In Ref. 3; AAK92049." evidence="19" ref="3">
    <original>P</original>
    <variation>Q</variation>
    <location>
        <position position="1397"/>
    </location>
</feature>
<feature type="sequence conflict" description="In Ref. 3; AAK92049." evidence="19" ref="3">
    <original>A</original>
    <variation>V</variation>
    <location>
        <position position="1478"/>
    </location>
</feature>
<feature type="sequence conflict" description="In Ref. 3; AAK92049." evidence="19" ref="3">
    <original>KT</original>
    <variation>QE</variation>
    <location>
        <begin position="1959"/>
        <end position="1960"/>
    </location>
</feature>
<feature type="sequence conflict" description="In Ref. 3; AAK92049." evidence="19" ref="3">
    <original>K</original>
    <variation>R</variation>
    <location>
        <position position="1963"/>
    </location>
</feature>
<feature type="sequence conflict" description="In Ref. 3; AAK92049." evidence="19" ref="3">
    <original>R</original>
    <variation>M</variation>
    <location>
        <position position="1982"/>
    </location>
</feature>
<feature type="sequence conflict" description="In Ref. 3; AAK92049." evidence="19" ref="3">
    <original>RYAQEH</original>
    <variation>KHAHEN</variation>
    <location>
        <begin position="1986"/>
        <end position="1991"/>
    </location>
</feature>
<feature type="sequence conflict" description="In Ref. 3; AAK92049." evidence="19" ref="3">
    <original>N</original>
    <variation>H</variation>
    <location>
        <position position="1995"/>
    </location>
</feature>
<feature type="sequence conflict" description="In Ref. 3; AAK92049." evidence="19" ref="3">
    <original>L</original>
    <variation>I</variation>
    <location>
        <position position="2001"/>
    </location>
</feature>
<feature type="sequence conflict" description="In Ref. 3; AAK92049." evidence="19" ref="3">
    <original>A</original>
    <variation>S</variation>
    <location>
        <position position="2016"/>
    </location>
</feature>
<feature type="sequence conflict" description="In Ref. 3; AAK92049." evidence="19" ref="3">
    <original>C</original>
    <variation>S</variation>
    <location>
        <position position="2022"/>
    </location>
</feature>
<feature type="sequence conflict" description="In Ref. 3; AAK92049." evidence="19" ref="3">
    <original>Q</original>
    <variation>L</variation>
    <location>
        <position position="2030"/>
    </location>
</feature>
<feature type="sequence conflict" description="In Ref. 3; AAK92049." evidence="19" ref="3">
    <original>S</original>
    <variation>T</variation>
    <location>
        <position position="2033"/>
    </location>
</feature>
<feature type="sequence conflict" description="In Ref. 3; AAK92049." evidence="19" ref="3">
    <original>LS</original>
    <variation>VC</variation>
    <location>
        <begin position="2045"/>
        <end position="2046"/>
    </location>
</feature>
<feature type="sequence conflict" description="In Ref. 3; AAK92049." evidence="19" ref="3">
    <original>K</original>
    <variation>P</variation>
    <location>
        <position position="2049"/>
    </location>
</feature>
<feature type="sequence conflict" description="In Ref. 3; AAK92049." evidence="19" ref="3">
    <original>E</original>
    <variation>D</variation>
    <location>
        <position position="2061"/>
    </location>
</feature>
<feature type="sequence conflict" description="In Ref. 3; AAK92049." evidence="19" ref="3">
    <original>G</original>
    <variation>E</variation>
    <location>
        <position position="2066"/>
    </location>
</feature>
<feature type="sequence conflict" description="In Ref. 3; AAK92049." evidence="19" ref="3">
    <original>K</original>
    <variation>R</variation>
    <location>
        <position position="2071"/>
    </location>
</feature>
<feature type="sequence conflict" description="In Ref. 3; AAK92049." evidence="19" ref="3">
    <original>P</original>
    <variation>S</variation>
    <location>
        <position position="2075"/>
    </location>
</feature>
<feature type="sequence conflict" description="In Ref. 3; AAK92049." evidence="19" ref="3">
    <original>TK</original>
    <variation>AQ</variation>
    <location>
        <begin position="2304"/>
        <end position="2305"/>
    </location>
</feature>
<feature type="sequence conflict" description="In Ref. 3; AAK92049." evidence="19" ref="3">
    <original>R</original>
    <variation>S</variation>
    <location>
        <position position="2352"/>
    </location>
</feature>
<feature type="sequence conflict" description="In Ref. 3; AAK92049." evidence="19" ref="3">
    <original>L</original>
    <variation>S</variation>
    <location>
        <position position="2539"/>
    </location>
</feature>
<feature type="sequence conflict" description="In Ref. 3; AAK92049." evidence="19" ref="3">
    <original>P</original>
    <variation>S</variation>
    <location>
        <position position="2543"/>
    </location>
</feature>
<feature type="sequence conflict" description="In Ref. 3; AAK92049." evidence="19" ref="3">
    <original>PGPLSQSPGLVKQAKQMVGGQQLPA</original>
    <variation>QGFFTKSPALVENKGKTKWVGRPTNYLH</variation>
    <location>
        <begin position="2567"/>
        <end position="2591"/>
    </location>
</feature>
<feature type="sequence conflict" description="In Ref. 3; AAK92049." evidence="19" ref="3">
    <original>G</original>
    <variation>W</variation>
    <location>
        <position position="2597"/>
    </location>
</feature>
<feature type="sequence conflict" description="In Ref. 3; AAK92049." evidence="19" ref="3">
    <original>ASLPT</original>
    <variation>PSSPN</variation>
    <location>
        <begin position="2608"/>
        <end position="2612"/>
    </location>
</feature>
<feature type="helix" evidence="27">
    <location>
        <begin position="1852"/>
        <end position="1863"/>
    </location>
</feature>
<feature type="helix" evidence="29">
    <location>
        <begin position="1869"/>
        <end position="1871"/>
    </location>
</feature>
<feature type="helix" evidence="27">
    <location>
        <begin position="1889"/>
        <end position="1891"/>
    </location>
</feature>
<feature type="strand" evidence="27">
    <location>
        <begin position="1901"/>
        <end position="1903"/>
    </location>
</feature>
<feature type="helix" evidence="27">
    <location>
        <begin position="1912"/>
        <end position="1915"/>
    </location>
</feature>
<feature type="turn" evidence="27">
    <location>
        <begin position="1922"/>
        <end position="1924"/>
    </location>
</feature>
<feature type="helix" evidence="27">
    <location>
        <begin position="1928"/>
        <end position="1930"/>
    </location>
</feature>
<feature type="helix" evidence="27">
    <location>
        <begin position="1935"/>
        <end position="1938"/>
    </location>
</feature>
<feature type="strand" evidence="27">
    <location>
        <begin position="1944"/>
        <end position="1948"/>
    </location>
</feature>
<feature type="strand" evidence="27">
    <location>
        <begin position="1950"/>
        <end position="1960"/>
    </location>
</feature>
<feature type="strand" evidence="27">
    <location>
        <begin position="1967"/>
        <end position="1970"/>
    </location>
</feature>
<feature type="strand" evidence="27">
    <location>
        <begin position="1973"/>
        <end position="1976"/>
    </location>
</feature>
<feature type="helix" evidence="27">
    <location>
        <begin position="1978"/>
        <end position="1990"/>
    </location>
</feature>
<feature type="strand" evidence="27">
    <location>
        <begin position="1998"/>
        <end position="2002"/>
    </location>
</feature>
<feature type="strand" evidence="27">
    <location>
        <begin position="2005"/>
        <end position="2013"/>
    </location>
</feature>
<feature type="helix" evidence="27">
    <location>
        <begin position="2015"/>
        <end position="2018"/>
    </location>
</feature>
<feature type="strand" evidence="27">
    <location>
        <begin position="2026"/>
        <end position="2034"/>
    </location>
</feature>
<feature type="strand" evidence="27">
    <location>
        <begin position="2037"/>
        <end position="2046"/>
    </location>
</feature>
<feature type="helix" evidence="29">
    <location>
        <begin position="2058"/>
        <end position="2060"/>
    </location>
</feature>
<feature type="strand" evidence="28">
    <location>
        <begin position="2062"/>
        <end position="2064"/>
    </location>
</feature>
<feature type="strand" evidence="29">
    <location>
        <begin position="2079"/>
        <end position="2082"/>
    </location>
</feature>
<proteinExistence type="evidence at protein level"/>
<keyword id="KW-0002">3D-structure</keyword>
<keyword id="KW-0010">Activator</keyword>
<keyword id="KW-0025">Alternative splicing</keyword>
<keyword id="KW-0156">Chromatin regulator</keyword>
<keyword id="KW-0160">Chromosomal rearrangement</keyword>
<keyword id="KW-0158">Chromosome</keyword>
<keyword id="KW-0225">Disease variant</keyword>
<keyword id="KW-1017">Isopeptide bond</keyword>
<keyword id="KW-0479">Metal-binding</keyword>
<keyword id="KW-0489">Methyltransferase</keyword>
<keyword id="KW-0539">Nucleus</keyword>
<keyword id="KW-0597">Phosphoprotein</keyword>
<keyword id="KW-1267">Proteomics identification</keyword>
<keyword id="KW-0656">Proto-oncogene</keyword>
<keyword id="KW-1185">Reference proteome</keyword>
<keyword id="KW-0677">Repeat</keyword>
<keyword id="KW-0678">Repressor</keyword>
<keyword id="KW-0949">S-adenosyl-L-methionine</keyword>
<keyword id="KW-0804">Transcription</keyword>
<keyword id="KW-0805">Transcription regulation</keyword>
<keyword id="KW-0808">Transferase</keyword>
<keyword id="KW-0832">Ubl conjugation</keyword>
<keyword id="KW-0862">Zinc</keyword>
<keyword id="KW-0863">Zinc-finger</keyword>
<sequence>MDQTCELPRRNCLLPFSNPVNLDAPEDKDSPFGNGQSNFSEPLNGCTMQLSTVSGTSQNAYGQDSPSCYIPLRRLQDLASMINVEYLNGSADGSESFQDPEKSDSRAQTPIVCTSLSPGGPTALAMKQEPSCNNSPELQVKVTKTIKNGFLHFENFTCVDDADVDSEMDPEQPVTEDESIEEIFEETQTNATCNYETKSENGVKVAMGSEQDSTPESRHGAVKSPFLPLAPQTETQKNKQRNEVDGSNEKAALLPAPFSLGDTNITIEEQLNSINLSFQDDPDSSTSTLGNMLELPGTSSSSTSQELPFCQPKKKSTPLKYEVGDLIWAKFKRRPWWPCRICSDPLINTHSKMKVSNRRPYRQYYVEAFGDPSERAWVAGKAIVMFEGRHQFEELPVLRRRGKQKEKGYRHKVPQKILSKWEASVGLAEQYDVPKGSKNRKCIPGSIKLDSEEDMPFEDCTNDPESEHDLLLNGCLKSLAFDSEHSADEKEKPCAKSRARKSSDNPKRTSVKKGHIQFEAHKDERRGKIPENLGLNFISGDISDTQASNELSRIANSLTGSNTAPGSFLFSSCGKNTAKKEFETSNGDSLLGLPEGALISKCSREKNKPQRSLVCGSKVKLCYIGAGDEEKRSDSISICTTSDDGSSDLDPIEHSSESDNSVLEIPDAFDRTENMLSMQKNEKIKYSRFAATNTRVKAKQKPLISNSHTDHLMGCTKSAEPGTETSQVNLSDLKASTLVHKPQSDFTNDALSPKFNLSSSISSENSLIKGGAANQALLHSKSKQPKFRSIKCKHKENPVMAEPPVINEECSLKCCSSDTKGSPLASISKSGKVDGLKLLNNMHEKTRDSSDIETAVVKHVLSELKELSYRSLGEDVSDSGTSKPSKPLLFSSASSQNHIPIEPDYKFSTLLMMLKDMHDSKTKEQRLMTAQNLVSYRSPGRGDCSTNSPVGVSKVLVSGGSTHNSEKKGDGTQNSANPSPSGGDSALSGELSASLPGLLSDKRDLPASGKSRSDCVTRRNCGRSKPSSKLRDAFSAQMVKNTVNRKALKTERKRKLNQLPSVTLDAVLQGDRERGGSLRGGAEDPSKEDPLQIMGHLTSEDGDHFSDVHFDSKVKQSDPGKISEKGLSFENGKGPELDSVMNSENDELNGVNQVVPKKRWQRLNQRRTKPRKRMNRFKEKENSECAFRVLLPSDPVQEGRDEFPEHRTPSASILEEPLTEQNHADCLDSAGPRLNVCDKSSASIGDMEKEPGIPSLTPQAELPEPAVRSEKKRLRKPSKWLLEYTEEYDQIFAPKKKQKKVQEQVHKVSSRCEEESLLARGRSSAQNKQVDENSLISTKEEPPVLEREAPFLEGPLAQSELGGGHAELPQLTLSVPVAPEVSPRPALESEELLVKTPGNYESKRQRKPTKKLLESNDLDPGFMPKKGDLGLSKKCYEAGHLENGITESCATSYSKDFGGGTTKIFDKPRKRKRQRHAAAKMQCKKVKNDDSSKEIPGSEGELMPHRTATSPKETVEEGVEHDPGMPASKKMQGERGGGAALKENVCQNCEKLGELLLCEAQCCGAFHLECLGLTEMPRGKFICNECRTGIHTCFVCKQSGEDVKRCLLPLCGKFYHEECVQKYPPTVMQNKGFRCSLHICITCHAANPANVSASKGRLMRCVRCPVAYHANDFCLAAGSKILASNSIICPNHFTPRRGCRNHEHVNVSWCFVCSEGGSLLCCDSCPAAFHRECLNIDIPEGNWYCNDCKAGKKPHYREIVWVKVGRYRWWPAEICHPRAVPSNIDKMRHDVGEFPVLFFGSNDYLWTHQARVFPYMEGDVSSKDKMGKGVDGTYKKALQEAAARFEELKAQKELRQLQEDRKNDKKPPPYKHIKVNRPIGRVQIFTADLSEIPRCNCKATDENPCGIDSECINRMLLYECHPTVCPAGGRCQNQCFSKRQYPEVEIFRTLQRGWGLRTKTDIKKGEFVNEYVGELIDEEECRARIRYAQEHDITNFYMLTLDKDRIIDAGPKGNYARFMNHCCQPNCETQKWSVNGDTRVGLFALSDIKAGTELTFNYNLECLGNGKTVCKCGAPNCSGFLGVRPKNQPIATEEKSKKFKKKQQGKRRTQGEITKEREDECFSCGDAGQLVSCKKPGCPKVYHADCLNLTKRPAGKWECPWHQCDICGKEAASFCEMCPSSFCKQHREGMLFISKLDGRLSCTEHDPCGPNPLEPGEIREYVPPPVPLPPGPSTHLAEQSTGMAAQAPKMSDKPPADTNQMLSLSKKALAGTCQRPLLPERPLERTDSRPQPLDKVRDLAGSGTKSQSLVSSQRPLDRPPAVAGPRPQLSDKPSPVTSPSSSPSVRSQPLERPLGTADPRLDKSIGAASPRPQSLEKTSVPTGLRLPPPDRLLITSSPKPQTSDRPTDKPHASLSQRLPPPEKVLSAVVQTLVAKEKALRPVDQNTQSKNRAALVMDLIDLTPRQKERAASPHQVTPQADEKMPVLESSSWPASKGLGHMPRAVEKGCVSDPLQTSGKAAAPSEDPWQAVKSLTQARLLSQPPAKAFLYEPTTQASGRASAGAEQTPGPLSQSPGLVKQAKQMVGGQQLPALAAKSGQSFRSLGKAPASLPTEEKKLVTTEQSPWALGKASSRAGLWPIVAGQTLAQSCWSAGSTQTLAQTCWSLGRGQDPKPEQNTLPALNQAPSSHKCAESEQK</sequence>
<comment type="function">
    <text evidence="16">Histone methyltransferase that dimethylates Lys-36 of histone H3 (H3K36me2). Transcriptional intermediary factor capable of both negatively or positively influencing transcription, depending on the cellular context.</text>
</comment>
<comment type="catalytic activity">
    <reaction evidence="16">
        <text>L-lysyl(36)-[histone H3] + 2 S-adenosyl-L-methionine = N(6),N(6)-dimethyl-L-lysyl(36)-[histone H3] + 2 S-adenosyl-L-homocysteine + 2 H(+)</text>
        <dbReference type="Rhea" id="RHEA:60308"/>
        <dbReference type="Rhea" id="RHEA-COMP:9785"/>
        <dbReference type="Rhea" id="RHEA-COMP:9787"/>
        <dbReference type="ChEBI" id="CHEBI:15378"/>
        <dbReference type="ChEBI" id="CHEBI:29969"/>
        <dbReference type="ChEBI" id="CHEBI:57856"/>
        <dbReference type="ChEBI" id="CHEBI:59789"/>
        <dbReference type="ChEBI" id="CHEBI:61976"/>
        <dbReference type="EC" id="2.1.1.357"/>
    </reaction>
</comment>
<comment type="subunit">
    <text evidence="1 9 16">Interacts with the ligand-binding domains of RARA and THRA in the absence of ligand; in the presence of ligand the interaction is severely disrupted but some binding still occurs. Interacts with the ligand-binding domains of RXRA and ESRRA only in the presence of ligand. Interacts with ZNF496 (By similarity). Interacts with AR DNA- and ligand-binding domains.</text>
</comment>
<comment type="interaction">
    <interactant intactId="EBI-2862434">
        <id>Q96L73</id>
    </interactant>
    <interactant intactId="EBI-1047359">
        <id>Q13283</id>
        <label>G3BP1</label>
    </interactant>
    <organismsDiffer>false</organismsDiffer>
    <experiments>2</experiments>
</comment>
<comment type="interaction">
    <interactant intactId="EBI-2862434">
        <id>Q96L73</id>
    </interactant>
    <interactant intactId="EBI-1056125">
        <id>Q16778</id>
        <label>H2BC21</label>
    </interactant>
    <organismsDiffer>false</organismsDiffer>
    <experiments>2</experiments>
</comment>
<comment type="interaction">
    <interactant intactId="EBI-2862434">
        <id>Q96L73</id>
    </interactant>
    <interactant intactId="EBI-73886">
        <id>Q04206</id>
        <label>RELA</label>
    </interactant>
    <organismsDiffer>false</organismsDiffer>
    <experiments>2</experiments>
</comment>
<comment type="interaction">
    <interactant intactId="EBI-11110981">
        <id>Q96L73-2</id>
    </interactant>
    <interactant intactId="EBI-712648">
        <id>O95994</id>
        <label>AGR2</label>
    </interactant>
    <organismsDiffer>false</organismsDiffer>
    <experiments>3</experiments>
</comment>
<comment type="interaction">
    <interactant intactId="EBI-11110981">
        <id>Q96L73-2</id>
    </interactant>
    <interactant intactId="EBI-11977221">
        <id>Q86Z20</id>
        <label>CCDC125</label>
    </interactant>
    <organismsDiffer>false</organismsDiffer>
    <experiments>3</experiments>
</comment>
<comment type="interaction">
    <interactant intactId="EBI-11110981">
        <id>Q96L73-2</id>
    </interactant>
    <interactant intactId="EBI-3867333">
        <id>A8MQ03</id>
        <label>CYSRT1</label>
    </interactant>
    <organismsDiffer>false</organismsDiffer>
    <experiments>3</experiments>
</comment>
<comment type="interaction">
    <interactant intactId="EBI-11110981">
        <id>Q96L73-2</id>
    </interactant>
    <interactant intactId="EBI-11962084">
        <id>Q3LI66</id>
        <label>KRTAP6-2</label>
    </interactant>
    <organismsDiffer>false</organismsDiffer>
    <experiments>3</experiments>
</comment>
<comment type="interaction">
    <interactant intactId="EBI-11110981">
        <id>Q96L73-2</id>
    </interactant>
    <interactant intactId="EBI-724076">
        <id>Q99750</id>
        <label>MDFI</label>
    </interactant>
    <organismsDiffer>false</organismsDiffer>
    <experiments>3</experiments>
</comment>
<comment type="subcellular location">
    <subcellularLocation>
        <location>Nucleus</location>
    </subcellularLocation>
    <subcellularLocation>
        <location evidence="19">Chromosome</location>
    </subcellularLocation>
</comment>
<comment type="alternative products">
    <event type="alternative splicing"/>
    <isoform>
        <id>Q96L73-1</id>
        <name>1</name>
        <name>ARA267-beta</name>
        <sequence type="displayed"/>
    </isoform>
    <isoform>
        <id>Q96L73-2</id>
        <name>2</name>
        <name>ARA267-alpha</name>
        <sequence type="described" ref="VSP_007682 VSP_007683"/>
    </isoform>
    <isoform>
        <id>Q96L73-3</id>
        <name>3</name>
        <sequence type="described" ref="VSP_007684"/>
    </isoform>
</comment>
<comment type="tissue specificity">
    <text>Expressed in the fetal/adult brain, kidney, skeletal muscle, spleen, and the thymus, and faintly in the lung.</text>
</comment>
<comment type="disease" evidence="10 11 12 13">
    <disease id="DI-02318">
        <name>Sotos syndrome</name>
        <acronym>SOTOS</acronym>
        <description>An autosomal dominant, childhood overgrowth syndrome characterized by pre- and postnatal overgrowth, developmental delay, intellectual disability, advanced bone age, and abnormal craniofacial morphology including macrodolichocephaly with frontal bossing, frontoparietal sparseness of hair, apparent hypertelorism, downslanting palpebral fissures, and facial flushing. Common oral findings include: premature eruption of teeth; high, arched palate; pointed chin and, more rarely, prognathism.</description>
        <dbReference type="MIM" id="117550"/>
    </disease>
    <text>The disease is caused by variants affecting the gene represented in this entry.</text>
</comment>
<comment type="disease" evidence="13">
    <disease id="DI-00179">
        <name>Beckwith-Wiedemann syndrome</name>
        <acronym>BWS</acronym>
        <description>A disorder characterized by anterior abdominal wall defects including exomphalos (omphalocele), pre- and postnatal overgrowth, and macroglossia. Additional less frequent complications include specific developmental defects and a predisposition to embryonal tumors.</description>
        <dbReference type="MIM" id="130650"/>
    </disease>
    <text>The disease is caused by variants affecting the gene represented in this entry.</text>
</comment>
<comment type="disease">
    <text>A chromosomal aberration involving NSD1 is found in childhood acute myeloid leukemia. Translocation t(5;11)(q35;p15.5) with NUP98.</text>
</comment>
<comment type="disease">
    <text evidence="14">A chromosomal aberration involving NSD1 is found in an adult form of myelodysplastic syndrome (MDS). Insertion of NUP98 into NSD1 generates a NUP98-NSD1 fusion product.</text>
</comment>
<comment type="similarity">
    <text evidence="6">Belongs to the class V-like SAM-binding methyltransferase superfamily.</text>
</comment>
<comment type="online information" name="Atlas of Genetics and Cytogenetics in Oncology and Haematology">
    <link uri="https://atlasgeneticsoncology.org/gene/356/NSD1"/>
</comment>
<evidence type="ECO:0000250" key="1"/>
<evidence type="ECO:0000250" key="2">
    <source>
        <dbReference type="UniProtKB" id="O88491"/>
    </source>
</evidence>
<evidence type="ECO:0000255" key="3">
    <source>
        <dbReference type="PROSITE-ProRule" id="PRU00146"/>
    </source>
</evidence>
<evidence type="ECO:0000255" key="4">
    <source>
        <dbReference type="PROSITE-ProRule" id="PRU00155"/>
    </source>
</evidence>
<evidence type="ECO:0000255" key="5">
    <source>
        <dbReference type="PROSITE-ProRule" id="PRU00162"/>
    </source>
</evidence>
<evidence type="ECO:0000255" key="6">
    <source>
        <dbReference type="PROSITE-ProRule" id="PRU00190"/>
    </source>
</evidence>
<evidence type="ECO:0000255" key="7">
    <source>
        <dbReference type="PROSITE-ProRule" id="PRU00562"/>
    </source>
</evidence>
<evidence type="ECO:0000256" key="8">
    <source>
        <dbReference type="SAM" id="MobiDB-lite"/>
    </source>
</evidence>
<evidence type="ECO:0000269" key="9">
    <source>
    </source>
</evidence>
<evidence type="ECO:0000269" key="10">
    <source>
    </source>
</evidence>
<evidence type="ECO:0000269" key="11">
    <source>
    </source>
</evidence>
<evidence type="ECO:0000269" key="12">
    <source>
    </source>
</evidence>
<evidence type="ECO:0000269" key="13">
    <source>
    </source>
</evidence>
<evidence type="ECO:0000269" key="14">
    <source>
    </source>
</evidence>
<evidence type="ECO:0000269" key="15">
    <source>
    </source>
</evidence>
<evidence type="ECO:0000269" key="16">
    <source>
    </source>
</evidence>
<evidence type="ECO:0000303" key="17">
    <source>
    </source>
</evidence>
<evidence type="ECO:0000303" key="18">
    <source>
    </source>
</evidence>
<evidence type="ECO:0000305" key="19"/>
<evidence type="ECO:0007744" key="20">
    <source>
    </source>
</evidence>
<evidence type="ECO:0007744" key="21">
    <source>
    </source>
</evidence>
<evidence type="ECO:0007744" key="22">
    <source>
    </source>
</evidence>
<evidence type="ECO:0007744" key="23">
    <source>
    </source>
</evidence>
<evidence type="ECO:0007744" key="24">
    <source>
    </source>
</evidence>
<evidence type="ECO:0007744" key="25">
    <source>
    </source>
</evidence>
<evidence type="ECO:0007744" key="26">
    <source>
    </source>
</evidence>
<evidence type="ECO:0007829" key="27">
    <source>
        <dbReference type="PDB" id="3OOI"/>
    </source>
</evidence>
<evidence type="ECO:0007829" key="28">
    <source>
        <dbReference type="PDB" id="6KQP"/>
    </source>
</evidence>
<evidence type="ECO:0007829" key="29">
    <source>
        <dbReference type="PDB" id="6KQQ"/>
    </source>
</evidence>
<dbReference type="EC" id="2.1.1.357" evidence="16"/>
<dbReference type="EMBL" id="AF380302">
    <property type="protein sequence ID" value="AAL27991.1"/>
    <property type="molecule type" value="mRNA"/>
</dbReference>
<dbReference type="EMBL" id="AY049721">
    <property type="protein sequence ID" value="AAL06645.1"/>
    <property type="molecule type" value="mRNA"/>
</dbReference>
<dbReference type="EMBL" id="AF395588">
    <property type="protein sequence ID" value="AAL40694.1"/>
    <property type="molecule type" value="mRNA"/>
</dbReference>
<dbReference type="EMBL" id="AF322907">
    <property type="protein sequence ID" value="AAK92049.1"/>
    <property type="molecule type" value="mRNA"/>
</dbReference>
<dbReference type="CCDS" id="CCDS4412.1">
    <molecule id="Q96L73-1"/>
</dbReference>
<dbReference type="RefSeq" id="NP_001396230.1">
    <molecule id="Q96L73-1"/>
    <property type="nucleotide sequence ID" value="NM_001409301.1"/>
</dbReference>
<dbReference type="RefSeq" id="NP_001396231.1">
    <molecule id="Q96L73-1"/>
    <property type="nucleotide sequence ID" value="NM_001409302.1"/>
</dbReference>
<dbReference type="RefSeq" id="NP_001396232.1">
    <molecule id="Q96L73-1"/>
    <property type="nucleotide sequence ID" value="NM_001409303.1"/>
</dbReference>
<dbReference type="RefSeq" id="NP_071900.2">
    <molecule id="Q96L73-1"/>
    <property type="nucleotide sequence ID" value="NM_022455.4"/>
</dbReference>
<dbReference type="RefSeq" id="NP_758859.1">
    <property type="nucleotide sequence ID" value="NM_172349.2"/>
</dbReference>
<dbReference type="PDB" id="3OOI">
    <property type="method" value="X-ray"/>
    <property type="resolution" value="1.75 A"/>
    <property type="chains" value="A=1852-2082"/>
</dbReference>
<dbReference type="PDB" id="6KQP">
    <property type="method" value="X-ray"/>
    <property type="resolution" value="2.40 A"/>
    <property type="chains" value="A=1864-2083"/>
</dbReference>
<dbReference type="PDB" id="6KQQ">
    <property type="method" value="X-ray"/>
    <property type="resolution" value="1.80 A"/>
    <property type="chains" value="A/B=1863-2085"/>
</dbReference>
<dbReference type="PDB" id="8C5L">
    <property type="method" value="X-ray"/>
    <property type="resolution" value="2.60 A"/>
    <property type="chains" value="C/D=904-922"/>
</dbReference>
<dbReference type="PDBsum" id="3OOI"/>
<dbReference type="PDBsum" id="6KQP"/>
<dbReference type="PDBsum" id="6KQQ"/>
<dbReference type="PDBsum" id="8C5L"/>
<dbReference type="SMR" id="Q96L73"/>
<dbReference type="BioGRID" id="122135">
    <property type="interactions" value="117"/>
</dbReference>
<dbReference type="CORUM" id="Q96L73"/>
<dbReference type="DIP" id="DIP-58517N"/>
<dbReference type="FunCoup" id="Q96L73">
    <property type="interactions" value="3096"/>
</dbReference>
<dbReference type="IntAct" id="Q96L73">
    <property type="interactions" value="44"/>
</dbReference>
<dbReference type="STRING" id="9606.ENSP00000395929"/>
<dbReference type="BindingDB" id="Q96L73"/>
<dbReference type="ChEMBL" id="CHEMBL3588738"/>
<dbReference type="GuidetoPHARMACOLOGY" id="2696"/>
<dbReference type="MoonDB" id="Q96L73">
    <property type="type" value="Predicted"/>
</dbReference>
<dbReference type="GlyGen" id="Q96L73">
    <property type="glycosylation" value="2 sites, 1 O-linked glycan (2 sites)"/>
</dbReference>
<dbReference type="iPTMnet" id="Q96L73"/>
<dbReference type="PhosphoSitePlus" id="Q96L73"/>
<dbReference type="SwissPalm" id="Q96L73"/>
<dbReference type="BioMuta" id="NSD1"/>
<dbReference type="DMDM" id="32469769"/>
<dbReference type="jPOST" id="Q96L73"/>
<dbReference type="MassIVE" id="Q96L73"/>
<dbReference type="PaxDb" id="9606-ENSP00000395929"/>
<dbReference type="PeptideAtlas" id="Q96L73"/>
<dbReference type="ProteomicsDB" id="77153">
    <molecule id="Q96L73-1"/>
</dbReference>
<dbReference type="ProteomicsDB" id="77154">
    <molecule id="Q96L73-2"/>
</dbReference>
<dbReference type="ProteomicsDB" id="77155">
    <molecule id="Q96L73-3"/>
</dbReference>
<dbReference type="Pumba" id="Q96L73"/>
<dbReference type="ABCD" id="Q96L73">
    <property type="antibodies" value="1 sequenced antibody"/>
</dbReference>
<dbReference type="Antibodypedia" id="29208">
    <property type="antibodies" value="191 antibodies from 27 providers"/>
</dbReference>
<dbReference type="DNASU" id="64324"/>
<dbReference type="Ensembl" id="ENST00000439151.7">
    <molecule id="Q96L73-1"/>
    <property type="protein sequence ID" value="ENSP00000395929.2"/>
    <property type="gene ID" value="ENSG00000165671.22"/>
</dbReference>
<dbReference type="Ensembl" id="ENST00000687453.1">
    <molecule id="Q96L73-3"/>
    <property type="protein sequence ID" value="ENSP00000508426.1"/>
    <property type="gene ID" value="ENSG00000165671.22"/>
</dbReference>
<dbReference type="GeneID" id="64324"/>
<dbReference type="KEGG" id="hsa:64324"/>
<dbReference type="MANE-Select" id="ENST00000439151.7">
    <property type="protein sequence ID" value="ENSP00000395929.2"/>
    <property type="RefSeq nucleotide sequence ID" value="NM_022455.5"/>
    <property type="RefSeq protein sequence ID" value="NP_071900.2"/>
</dbReference>
<dbReference type="UCSC" id="uc003mfr.5">
    <molecule id="Q96L73-1"/>
    <property type="organism name" value="human"/>
</dbReference>
<dbReference type="AGR" id="HGNC:14234"/>
<dbReference type="CTD" id="64324"/>
<dbReference type="DisGeNET" id="64324"/>
<dbReference type="GeneCards" id="NSD1"/>
<dbReference type="GeneReviews" id="NSD1"/>
<dbReference type="HGNC" id="HGNC:14234">
    <property type="gene designation" value="NSD1"/>
</dbReference>
<dbReference type="HPA" id="ENSG00000165671">
    <property type="expression patterns" value="Low tissue specificity"/>
</dbReference>
<dbReference type="MalaCards" id="NSD1"/>
<dbReference type="MIM" id="117550">
    <property type="type" value="phenotype"/>
</dbReference>
<dbReference type="MIM" id="130650">
    <property type="type" value="phenotype"/>
</dbReference>
<dbReference type="MIM" id="606681">
    <property type="type" value="gene"/>
</dbReference>
<dbReference type="neXtProt" id="NX_Q96L73"/>
<dbReference type="OpenTargets" id="ENSG00000165671"/>
<dbReference type="Orphanet" id="228415">
    <property type="disease" value="5q35 microduplication syndrome"/>
</dbReference>
<dbReference type="Orphanet" id="238613">
    <property type="disease" value="Beckwith-Wiedemann syndrome due to NSD1 mutation"/>
</dbReference>
<dbReference type="Orphanet" id="1627">
    <property type="disease" value="Deletion 5q35 syndrome"/>
</dbReference>
<dbReference type="Orphanet" id="821">
    <property type="disease" value="Sotos syndrome"/>
</dbReference>
<dbReference type="Orphanet" id="3447">
    <property type="disease" value="Weaver syndrome"/>
</dbReference>
<dbReference type="PharmGKB" id="PA31790"/>
<dbReference type="VEuPathDB" id="HostDB:ENSG00000165671"/>
<dbReference type="eggNOG" id="KOG1081">
    <property type="taxonomic scope" value="Eukaryota"/>
</dbReference>
<dbReference type="GeneTree" id="ENSGT00940000155027"/>
<dbReference type="HOGENOM" id="CLU_000756_0_0_1"/>
<dbReference type="InParanoid" id="Q96L73"/>
<dbReference type="OMA" id="CTKTAES"/>
<dbReference type="OrthoDB" id="422362at2759"/>
<dbReference type="PAN-GO" id="Q96L73">
    <property type="GO annotations" value="4 GO annotations based on evolutionary models"/>
</dbReference>
<dbReference type="PhylomeDB" id="Q96L73"/>
<dbReference type="TreeFam" id="TF329088"/>
<dbReference type="BioCyc" id="MetaCyc:HS09264-MONOMER"/>
<dbReference type="BRENDA" id="2.1.1.357">
    <property type="organism ID" value="2681"/>
</dbReference>
<dbReference type="BRENDA" id="2.1.1.362">
    <property type="organism ID" value="2681"/>
</dbReference>
<dbReference type="PathwayCommons" id="Q96L73"/>
<dbReference type="Reactome" id="R-HSA-3214841">
    <property type="pathway name" value="PKMTs methylate histone lysines"/>
</dbReference>
<dbReference type="SignaLink" id="Q96L73"/>
<dbReference type="SIGNOR" id="Q96L73"/>
<dbReference type="BioGRID-ORCS" id="64324">
    <property type="hits" value="108 hits in 1183 CRISPR screens"/>
</dbReference>
<dbReference type="ChiTaRS" id="NSD1">
    <property type="organism name" value="human"/>
</dbReference>
<dbReference type="EvolutionaryTrace" id="Q96L73"/>
<dbReference type="GenomeRNAi" id="64324"/>
<dbReference type="Pharos" id="Q96L73">
    <property type="development level" value="Tbio"/>
</dbReference>
<dbReference type="PRO" id="PR:Q96L73"/>
<dbReference type="Proteomes" id="UP000005640">
    <property type="component" value="Chromosome 5"/>
</dbReference>
<dbReference type="RNAct" id="Q96L73">
    <property type="molecule type" value="protein"/>
</dbReference>
<dbReference type="Bgee" id="ENSG00000165671">
    <property type="expression patterns" value="Expressed in sural nerve and 161 other cell types or tissues"/>
</dbReference>
<dbReference type="ExpressionAtlas" id="Q96L73">
    <property type="expression patterns" value="baseline and differential"/>
</dbReference>
<dbReference type="GO" id="GO:0000785">
    <property type="term" value="C:chromatin"/>
    <property type="evidence" value="ECO:0000318"/>
    <property type="project" value="GO_Central"/>
</dbReference>
<dbReference type="GO" id="GO:0005654">
    <property type="term" value="C:nucleoplasm"/>
    <property type="evidence" value="ECO:0000304"/>
    <property type="project" value="Reactome"/>
</dbReference>
<dbReference type="GO" id="GO:0005634">
    <property type="term" value="C:nucleus"/>
    <property type="evidence" value="ECO:0000318"/>
    <property type="project" value="GO_Central"/>
</dbReference>
<dbReference type="GO" id="GO:0003682">
    <property type="term" value="F:chromatin binding"/>
    <property type="evidence" value="ECO:0000250"/>
    <property type="project" value="UniProtKB"/>
</dbReference>
<dbReference type="GO" id="GO:0140938">
    <property type="term" value="F:histone H3 methyltransferase activity"/>
    <property type="evidence" value="ECO:0000304"/>
    <property type="project" value="Reactome"/>
</dbReference>
<dbReference type="GO" id="GO:0140954">
    <property type="term" value="F:histone H3K36 dimethyltransferase activity"/>
    <property type="evidence" value="ECO:0007669"/>
    <property type="project" value="UniProtKB-EC"/>
</dbReference>
<dbReference type="GO" id="GO:0046975">
    <property type="term" value="F:histone H3K36 methyltransferase activity"/>
    <property type="evidence" value="ECO:0000314"/>
    <property type="project" value="UniProtKB"/>
</dbReference>
<dbReference type="GO" id="GO:0042799">
    <property type="term" value="F:histone H4K20 methyltransferase activity"/>
    <property type="evidence" value="ECO:0000250"/>
    <property type="project" value="UniProtKB"/>
</dbReference>
<dbReference type="GO" id="GO:0050681">
    <property type="term" value="F:nuclear androgen receptor binding"/>
    <property type="evidence" value="ECO:0000314"/>
    <property type="project" value="UniProtKB"/>
</dbReference>
<dbReference type="GO" id="GO:0030331">
    <property type="term" value="F:nuclear estrogen receptor binding"/>
    <property type="evidence" value="ECO:0000250"/>
    <property type="project" value="UniProtKB"/>
</dbReference>
<dbReference type="GO" id="GO:0042974">
    <property type="term" value="F:nuclear retinoic acid receptor binding"/>
    <property type="evidence" value="ECO:0000250"/>
    <property type="project" value="UniProtKB"/>
</dbReference>
<dbReference type="GO" id="GO:0046965">
    <property type="term" value="F:nuclear retinoid X receptor binding"/>
    <property type="evidence" value="ECO:0000250"/>
    <property type="project" value="UniProtKB"/>
</dbReference>
<dbReference type="GO" id="GO:0046966">
    <property type="term" value="F:nuclear thyroid hormone receptor binding"/>
    <property type="evidence" value="ECO:0000250"/>
    <property type="project" value="UniProtKB"/>
</dbReference>
<dbReference type="GO" id="GO:0000978">
    <property type="term" value="F:RNA polymerase II cis-regulatory region sequence-specific DNA binding"/>
    <property type="evidence" value="ECO:0000314"/>
    <property type="project" value="MGI"/>
</dbReference>
<dbReference type="GO" id="GO:0003712">
    <property type="term" value="F:transcription coregulator activity"/>
    <property type="evidence" value="ECO:0000314"/>
    <property type="project" value="UniProtKB"/>
</dbReference>
<dbReference type="GO" id="GO:0003714">
    <property type="term" value="F:transcription corepressor activity"/>
    <property type="evidence" value="ECO:0000250"/>
    <property type="project" value="UniProtKB"/>
</dbReference>
<dbReference type="GO" id="GO:0008270">
    <property type="term" value="F:zinc ion binding"/>
    <property type="evidence" value="ECO:0000314"/>
    <property type="project" value="UniProtKB"/>
</dbReference>
<dbReference type="GO" id="GO:0032259">
    <property type="term" value="P:methylation"/>
    <property type="evidence" value="ECO:0007669"/>
    <property type="project" value="UniProtKB-KW"/>
</dbReference>
<dbReference type="GO" id="GO:0000122">
    <property type="term" value="P:negative regulation of transcription by RNA polymerase II"/>
    <property type="evidence" value="ECO:0000250"/>
    <property type="project" value="UniProtKB"/>
</dbReference>
<dbReference type="GO" id="GO:0045893">
    <property type="term" value="P:positive regulation of DNA-templated transcription"/>
    <property type="evidence" value="ECO:0000314"/>
    <property type="project" value="UniProtKB"/>
</dbReference>
<dbReference type="GO" id="GO:0006355">
    <property type="term" value="P:regulation of DNA-templated transcription"/>
    <property type="evidence" value="ECO:0000318"/>
    <property type="project" value="GO_Central"/>
</dbReference>
<dbReference type="GO" id="GO:0033135">
    <property type="term" value="P:regulation of peptidyl-serine phosphorylation"/>
    <property type="evidence" value="ECO:0000315"/>
    <property type="project" value="MGI"/>
</dbReference>
<dbReference type="GO" id="GO:1903025">
    <property type="term" value="P:regulation of RNA polymerase II regulatory region sequence-specific DNA binding"/>
    <property type="evidence" value="ECO:0000315"/>
    <property type="project" value="MGI"/>
</dbReference>
<dbReference type="CDD" id="cd15648">
    <property type="entry name" value="PHD1_NSD1_2"/>
    <property type="match status" value="1"/>
</dbReference>
<dbReference type="CDD" id="cd15650">
    <property type="entry name" value="PHD2_NSD1"/>
    <property type="match status" value="1"/>
</dbReference>
<dbReference type="CDD" id="cd15653">
    <property type="entry name" value="PHD3_NSD1"/>
    <property type="match status" value="1"/>
</dbReference>
<dbReference type="CDD" id="cd15656">
    <property type="entry name" value="PHD4_NSD1"/>
    <property type="match status" value="1"/>
</dbReference>
<dbReference type="CDD" id="cd15659">
    <property type="entry name" value="PHD5_NSD1"/>
    <property type="match status" value="1"/>
</dbReference>
<dbReference type="CDD" id="cd20161">
    <property type="entry name" value="PWWP_NSD1_rpt1"/>
    <property type="match status" value="1"/>
</dbReference>
<dbReference type="CDD" id="cd20164">
    <property type="entry name" value="PWWP_NSD1_rpt2"/>
    <property type="match status" value="1"/>
</dbReference>
<dbReference type="CDD" id="cd19210">
    <property type="entry name" value="SET_NSD1"/>
    <property type="match status" value="1"/>
</dbReference>
<dbReference type="FunFam" id="2.170.270.10:FF:000002">
    <property type="entry name" value="Histone-lysine N-methyltransferase"/>
    <property type="match status" value="1"/>
</dbReference>
<dbReference type="FunFam" id="2.30.30.140:FF:000004">
    <property type="entry name" value="Histone-lysine N-methyltransferase"/>
    <property type="match status" value="1"/>
</dbReference>
<dbReference type="FunFam" id="2.30.30.140:FF:000059">
    <property type="entry name" value="Histone-lysine N-methyltransferase"/>
    <property type="match status" value="1"/>
</dbReference>
<dbReference type="FunFam" id="3.30.40.10:FF:000025">
    <property type="entry name" value="Histone-lysine N-methyltransferase"/>
    <property type="match status" value="1"/>
</dbReference>
<dbReference type="FunFam" id="3.30.40.10:FF:000093">
    <property type="entry name" value="Histone-lysine N-methyltransferase"/>
    <property type="match status" value="1"/>
</dbReference>
<dbReference type="FunFam" id="3.30.40.10:FF:000106">
    <property type="entry name" value="Histone-lysine N-methyltransferase"/>
    <property type="match status" value="1"/>
</dbReference>
<dbReference type="FunFam" id="3.30.40.10:FF:000201">
    <property type="entry name" value="Histone-lysine N-methyltransferase"/>
    <property type="match status" value="1"/>
</dbReference>
<dbReference type="Gene3D" id="2.30.30.140">
    <property type="match status" value="2"/>
</dbReference>
<dbReference type="Gene3D" id="2.170.270.10">
    <property type="entry name" value="SET domain"/>
    <property type="match status" value="1"/>
</dbReference>
<dbReference type="Gene3D" id="3.30.40.10">
    <property type="entry name" value="Zinc/RING finger domain, C3HC4 (zinc finger)"/>
    <property type="match status" value="4"/>
</dbReference>
<dbReference type="InterPro" id="IPR006560">
    <property type="entry name" value="AWS_dom"/>
</dbReference>
<dbReference type="InterPro" id="IPR041306">
    <property type="entry name" value="C5HCH"/>
</dbReference>
<dbReference type="InterPro" id="IPR055198">
    <property type="entry name" value="NSD_PHD"/>
</dbReference>
<dbReference type="InterPro" id="IPR047426">
    <property type="entry name" value="PHD1_NSD1_2"/>
</dbReference>
<dbReference type="InterPro" id="IPR047428">
    <property type="entry name" value="PHD2_NSD1"/>
</dbReference>
<dbReference type="InterPro" id="IPR047429">
    <property type="entry name" value="PHD3_NSD1"/>
</dbReference>
<dbReference type="InterPro" id="IPR047430">
    <property type="entry name" value="PHD4_NSD1"/>
</dbReference>
<dbReference type="InterPro" id="IPR047432">
    <property type="entry name" value="PHD5_NSD1"/>
</dbReference>
<dbReference type="InterPro" id="IPR055197">
    <property type="entry name" value="PHDvar_NSD"/>
</dbReference>
<dbReference type="InterPro" id="IPR003616">
    <property type="entry name" value="Post-SET_dom"/>
</dbReference>
<dbReference type="InterPro" id="IPR000313">
    <property type="entry name" value="PWWP_dom"/>
</dbReference>
<dbReference type="InterPro" id="IPR047423">
    <property type="entry name" value="PWWP_NSD1_rpt2"/>
</dbReference>
<dbReference type="InterPro" id="IPR050777">
    <property type="entry name" value="SET2_Histone-Lys_MeTrsfase"/>
</dbReference>
<dbReference type="InterPro" id="IPR001214">
    <property type="entry name" value="SET_dom"/>
</dbReference>
<dbReference type="InterPro" id="IPR046341">
    <property type="entry name" value="SET_dom_sf"/>
</dbReference>
<dbReference type="InterPro" id="IPR047433">
    <property type="entry name" value="SET_NSD1"/>
</dbReference>
<dbReference type="InterPro" id="IPR019786">
    <property type="entry name" value="Zinc_finger_PHD-type_CS"/>
</dbReference>
<dbReference type="InterPro" id="IPR011011">
    <property type="entry name" value="Znf_FYVE_PHD"/>
</dbReference>
<dbReference type="InterPro" id="IPR001965">
    <property type="entry name" value="Znf_PHD"/>
</dbReference>
<dbReference type="InterPro" id="IPR019787">
    <property type="entry name" value="Znf_PHD-finger"/>
</dbReference>
<dbReference type="InterPro" id="IPR013083">
    <property type="entry name" value="Znf_RING/FYVE/PHD"/>
</dbReference>
<dbReference type="PANTHER" id="PTHR22884">
    <property type="entry name" value="SET DOMAIN PROTEINS"/>
    <property type="match status" value="1"/>
</dbReference>
<dbReference type="Pfam" id="PF17907">
    <property type="entry name" value="AWS"/>
    <property type="match status" value="1"/>
</dbReference>
<dbReference type="Pfam" id="PF17982">
    <property type="entry name" value="C5HCH"/>
    <property type="match status" value="1"/>
</dbReference>
<dbReference type="Pfam" id="PF00628">
    <property type="entry name" value="PHD"/>
    <property type="match status" value="1"/>
</dbReference>
<dbReference type="Pfam" id="PF23011">
    <property type="entry name" value="PHD-1st_NSD"/>
    <property type="match status" value="1"/>
</dbReference>
<dbReference type="Pfam" id="PF22908">
    <property type="entry name" value="PHD_NSD"/>
    <property type="match status" value="1"/>
</dbReference>
<dbReference type="Pfam" id="PF23004">
    <property type="entry name" value="PHDvar_NSD"/>
    <property type="match status" value="1"/>
</dbReference>
<dbReference type="Pfam" id="PF00855">
    <property type="entry name" value="PWWP"/>
    <property type="match status" value="2"/>
</dbReference>
<dbReference type="Pfam" id="PF00856">
    <property type="entry name" value="SET"/>
    <property type="match status" value="1"/>
</dbReference>
<dbReference type="SMART" id="SM00570">
    <property type="entry name" value="AWS"/>
    <property type="match status" value="1"/>
</dbReference>
<dbReference type="SMART" id="SM00249">
    <property type="entry name" value="PHD"/>
    <property type="match status" value="5"/>
</dbReference>
<dbReference type="SMART" id="SM00508">
    <property type="entry name" value="PostSET"/>
    <property type="match status" value="1"/>
</dbReference>
<dbReference type="SMART" id="SM00293">
    <property type="entry name" value="PWWP"/>
    <property type="match status" value="2"/>
</dbReference>
<dbReference type="SMART" id="SM00317">
    <property type="entry name" value="SET"/>
    <property type="match status" value="1"/>
</dbReference>
<dbReference type="SUPFAM" id="SSF57903">
    <property type="entry name" value="FYVE/PHD zinc finger"/>
    <property type="match status" value="3"/>
</dbReference>
<dbReference type="SUPFAM" id="SSF82199">
    <property type="entry name" value="SET domain"/>
    <property type="match status" value="1"/>
</dbReference>
<dbReference type="SUPFAM" id="SSF63748">
    <property type="entry name" value="Tudor/PWWP/MBT"/>
    <property type="match status" value="2"/>
</dbReference>
<dbReference type="PROSITE" id="PS51215">
    <property type="entry name" value="AWS"/>
    <property type="match status" value="1"/>
</dbReference>
<dbReference type="PROSITE" id="PS50868">
    <property type="entry name" value="POST_SET"/>
    <property type="match status" value="1"/>
</dbReference>
<dbReference type="PROSITE" id="PS50812">
    <property type="entry name" value="PWWP"/>
    <property type="match status" value="2"/>
</dbReference>
<dbReference type="PROSITE" id="PS50280">
    <property type="entry name" value="SET"/>
    <property type="match status" value="1"/>
</dbReference>
<dbReference type="PROSITE" id="PS01359">
    <property type="entry name" value="ZF_PHD_1"/>
    <property type="match status" value="2"/>
</dbReference>
<dbReference type="PROSITE" id="PS50016">
    <property type="entry name" value="ZF_PHD_2"/>
    <property type="match status" value="2"/>
</dbReference>
<accession>Q96L73</accession>
<accession>Q96PD8</accession>
<accession>Q96RN7</accession>
<name>NSD1_HUMAN</name>
<gene>
    <name type="primary">NSD1</name>
    <name type="synonym">ARA267</name>
    <name type="synonym">KMT3B</name>
</gene>
<reference key="1">
    <citation type="journal article" date="2001" name="J. Biol. Chem.">
        <title>Identification and characterization of a novel androgen receptor coregulator ARA267-alpha in prostate cancer cells.</title>
        <authorList>
            <person name="Wang X."/>
            <person name="Yeh S."/>
            <person name="Wu G."/>
            <person name="Hsu C.-L."/>
            <person name="Wang L."/>
            <person name="Chang T."/>
            <person name="Yang Y."/>
            <person name="Guo Y."/>
            <person name="Chang C."/>
        </authorList>
    </citation>
    <scope>NUCLEOTIDE SEQUENCE [MRNA] (ISOFORMS 1 AND 2)</scope>
    <scope>INTERACTION WITH AR</scope>
</reference>
<reference key="2">
    <citation type="journal article" date="2001" name="Gene">
        <title>Molecular characterization of NSD1, a human homologue of the mouse Nsd1 gene.</title>
        <authorList>
            <person name="Kurotaki N."/>
            <person name="Harada N."/>
            <person name="Yoshiura K."/>
            <person name="Sugano S."/>
            <person name="Niikawa N."/>
            <person name="Matsumoto N."/>
        </authorList>
    </citation>
    <scope>NUCLEOTIDE SEQUENCE [MRNA] (ISOFORM 1)</scope>
</reference>
<reference key="3">
    <citation type="journal article" date="2001" name="Blood">
        <title>A novel gene, NSD1, is fused to NUP98 in the t(5;11)(q35;p15.5) in de novo childhood acute myeloid leukemia.</title>
        <authorList>
            <person name="Jaju R.J."/>
            <person name="Fidler C."/>
            <person name="Haas O.A."/>
            <person name="Strickson A.J."/>
            <person name="Watkins F."/>
            <person name="Clark K."/>
            <person name="Cross N.C."/>
            <person name="Cheng J.F."/>
            <person name="Aplan P.D."/>
            <person name="Kearney L."/>
            <person name="Boultwood J."/>
            <person name="Wainscoat J.S."/>
        </authorList>
    </citation>
    <scope>NUCLEOTIDE SEQUENCE [MRNA] (ISOFORM 3)</scope>
    <scope>CHROMOSOMAL TRANSLOCATION WITH NUP98</scope>
</reference>
<reference key="4">
    <citation type="journal article" date="2002" name="Nat. Genet.">
        <title>Haploinsufficiency of NSD1 causes Sotos syndrome.</title>
        <authorList>
            <person name="Kurotaki N."/>
            <person name="Imaizumi K."/>
            <person name="Harada N."/>
            <person name="Masuno M."/>
            <person name="Kondoh T."/>
            <person name="Nagai T."/>
            <person name="Ohashi H."/>
            <person name="Naritomi K."/>
            <person name="Tsukahara M."/>
            <person name="Makita Y."/>
            <person name="Sugimoto T."/>
            <person name="Sonoda T."/>
            <person name="Hasegawa T."/>
            <person name="Chinen Y."/>
            <person name="Tomita Ha H.A."/>
            <person name="Kinoshita A."/>
            <person name="Mizuguchi T."/>
            <person name="Yoshiura Ki K."/>
            <person name="Ohta T."/>
            <person name="Kishino T."/>
            <person name="Fukushima Y."/>
            <person name="Niikawa N."/>
            <person name="Matsumoto N."/>
        </authorList>
    </citation>
    <scope>INVOLVEMENT IN SOTOS</scope>
</reference>
<reference key="5">
    <citation type="journal article" date="2004" name="Am. J. Hum. Genet.">
        <title>Paradoxical NSD1 mutations in Beckwith-Wiedemann syndrome and 11p15 anomalies in Sotos syndrome.</title>
        <authorList>
            <person name="Baujat G."/>
            <person name="Rio M."/>
            <person name="Rossignol S."/>
            <person name="Sanlaville D."/>
            <person name="Lyonnet S."/>
            <person name="Le Merrer M."/>
            <person name="Munnich A."/>
            <person name="Gicquel C."/>
            <person name="Cormier-Daire V."/>
            <person name="Colleaux L."/>
        </authorList>
    </citation>
    <scope>INVOLVEMENT IN SOTOS AND BWS</scope>
</reference>
<reference key="6">
    <citation type="journal article" date="2004" name="Genes Chromosomes Cancer">
        <title>Cryptic insertion producing two NUP98/NSD1 chimeric transcripts in adult refractory anemia with an excess of blasts.</title>
        <authorList>
            <person name="La Starza R."/>
            <person name="Gorello P."/>
            <person name="Rosati R."/>
            <person name="Riezzo A."/>
            <person name="Veronese A."/>
            <person name="Ferrazzi E."/>
            <person name="Martelli M.F."/>
            <person name="Negrini M."/>
            <person name="Mecucci C."/>
        </authorList>
    </citation>
    <scope>INVOLVEMENT IN MYELODYSPLASTIC SYNDROME</scope>
</reference>
<reference key="7">
    <citation type="journal article" date="2007" name="Electrophoresis">
        <title>Toward a global characterization of the phosphoproteome in prostate cancer cells: identification of phosphoproteins in the LNCaP cell line.</title>
        <authorList>
            <person name="Giorgianni F."/>
            <person name="Zhao Y."/>
            <person name="Desiderio D.M."/>
            <person name="Beranova-Giorgianni S."/>
        </authorList>
    </citation>
    <scope>PHOSPHORYLATION [LARGE SCALE ANALYSIS] AT SER-766</scope>
    <scope>IDENTIFICATION BY MASS SPECTROMETRY [LARGE SCALE ANALYSIS]</scope>
    <source>
        <tissue>Prostate cancer</tissue>
    </source>
</reference>
<reference key="8">
    <citation type="journal article" date="2008" name="Proc. Natl. Acad. Sci. U.S.A.">
        <title>A quantitative atlas of mitotic phosphorylation.</title>
        <authorList>
            <person name="Dephoure N."/>
            <person name="Zhou C."/>
            <person name="Villen J."/>
            <person name="Beausoleil S.A."/>
            <person name="Bakalarski C.E."/>
            <person name="Elledge S.J."/>
            <person name="Gygi S.P."/>
        </authorList>
    </citation>
    <scope>PHOSPHORYLATION [LARGE SCALE ANALYSIS] AT SER-2471</scope>
    <scope>IDENTIFICATION BY MASS SPECTROMETRY [LARGE SCALE ANALYSIS]</scope>
    <source>
        <tissue>Cervix carcinoma</tissue>
    </source>
</reference>
<reference key="9">
    <citation type="journal article" date="2009" name="Anal. Chem.">
        <title>Lys-N and trypsin cover complementary parts of the phosphoproteome in a refined SCX-based approach.</title>
        <authorList>
            <person name="Gauci S."/>
            <person name="Helbig A.O."/>
            <person name="Slijper M."/>
            <person name="Krijgsveld J."/>
            <person name="Heck A.J."/>
            <person name="Mohammed S."/>
        </authorList>
    </citation>
    <scope>IDENTIFICATION BY MASS SPECTROMETRY [LARGE SCALE ANALYSIS]</scope>
</reference>
<reference key="10">
    <citation type="journal article" date="2009" name="Mol. Cell. Proteomics">
        <title>Large-scale proteomics analysis of the human kinome.</title>
        <authorList>
            <person name="Oppermann F.S."/>
            <person name="Gnad F."/>
            <person name="Olsen J.V."/>
            <person name="Hornberger R."/>
            <person name="Greff Z."/>
            <person name="Keri G."/>
            <person name="Mann M."/>
            <person name="Daub H."/>
        </authorList>
    </citation>
    <scope>IDENTIFICATION BY MASS SPECTROMETRY [LARGE SCALE ANALYSIS]</scope>
</reference>
<reference key="11">
    <citation type="journal article" date="2010" name="Sci. Signal.">
        <title>Quantitative phosphoproteomics reveals widespread full phosphorylation site occupancy during mitosis.</title>
        <authorList>
            <person name="Olsen J.V."/>
            <person name="Vermeulen M."/>
            <person name="Santamaria A."/>
            <person name="Kumar C."/>
            <person name="Miller M.L."/>
            <person name="Jensen L.J."/>
            <person name="Gnad F."/>
            <person name="Cox J."/>
            <person name="Jensen T.S."/>
            <person name="Nigg E.A."/>
            <person name="Brunak S."/>
            <person name="Mann M."/>
        </authorList>
    </citation>
    <scope>PHOSPHORYLATION [LARGE SCALE ANALYSIS] AT THR-2462</scope>
    <scope>IDENTIFICATION BY MASS SPECTROMETRY [LARGE SCALE ANALYSIS]</scope>
    <source>
        <tissue>Cervix carcinoma</tissue>
    </source>
</reference>
<reference key="12">
    <citation type="journal article" date="2011" name="Sci. Signal.">
        <title>System-wide temporal characterization of the proteome and phosphoproteome of human embryonic stem cell differentiation.</title>
        <authorList>
            <person name="Rigbolt K.T."/>
            <person name="Prokhorova T.A."/>
            <person name="Akimov V."/>
            <person name="Henningsen J."/>
            <person name="Johansen P.T."/>
            <person name="Kratchmarova I."/>
            <person name="Kassem M."/>
            <person name="Mann M."/>
            <person name="Olsen J.V."/>
            <person name="Blagoev B."/>
        </authorList>
    </citation>
    <scope>PHOSPHORYLATION [LARGE SCALE ANALYSIS] AT SER-483 AND SER-486</scope>
    <scope>IDENTIFICATION BY MASS SPECTROMETRY [LARGE SCALE ANALYSIS]</scope>
</reference>
<reference key="13">
    <citation type="journal article" date="2013" name="J. Proteome Res.">
        <title>Toward a comprehensive characterization of a human cancer cell phosphoproteome.</title>
        <authorList>
            <person name="Zhou H."/>
            <person name="Di Palma S."/>
            <person name="Preisinger C."/>
            <person name="Peng M."/>
            <person name="Polat A.N."/>
            <person name="Heck A.J."/>
            <person name="Mohammed S."/>
        </authorList>
    </citation>
    <scope>PHOSPHORYLATION [LARGE SCALE ANALYSIS] AT SER-483; SER-486; SER-2369 AND SER-2471</scope>
    <scope>IDENTIFICATION BY MASS SPECTROMETRY [LARGE SCALE ANALYSIS]</scope>
    <source>
        <tissue>Cervix carcinoma</tissue>
        <tissue>Erythroleukemia</tissue>
    </source>
</reference>
<reference key="14">
    <citation type="journal article" date="2014" name="Nat. Struct. Mol. Biol.">
        <title>Uncovering global SUMOylation signaling networks in a site-specific manner.</title>
        <authorList>
            <person name="Hendriks I.A."/>
            <person name="D'Souza R.C."/>
            <person name="Yang B."/>
            <person name="Verlaan-de Vries M."/>
            <person name="Mann M."/>
            <person name="Vertegaal A.C."/>
        </authorList>
    </citation>
    <scope>SUMOYLATION [LARGE SCALE ANALYSIS] AT LYS-2616</scope>
    <scope>IDENTIFICATION BY MASS SPECTROMETRY [LARGE SCALE ANALYSIS]</scope>
</reference>
<reference key="15">
    <citation type="journal article" date="2017" name="Nat. Struct. Mol. Biol.">
        <title>Site-specific mapping of the human SUMO proteome reveals co-modification with phosphorylation.</title>
        <authorList>
            <person name="Hendriks I.A."/>
            <person name="Lyon D."/>
            <person name="Young C."/>
            <person name="Jensen L.J."/>
            <person name="Vertegaal A.C."/>
            <person name="Nielsen M.L."/>
        </authorList>
    </citation>
    <scope>SUMOYLATION [LARGE SCALE ANALYSIS] AT LYS-906 AND LYS-1339</scope>
    <scope>IDENTIFICATION BY MASS SPECTROMETRY [LARGE SCALE ANALYSIS]</scope>
</reference>
<reference key="16">
    <citation type="journal article" date="2011" name="J. Biol. Chem.">
        <title>The structure of NSD1 reveals an autoregulatory mechanism underlying histone H3K36 methylation.</title>
        <authorList>
            <person name="Qiao Q."/>
            <person name="Li Y."/>
            <person name="Chen Z."/>
            <person name="Wang M."/>
            <person name="Reinberg D."/>
            <person name="Xu R.M."/>
        </authorList>
    </citation>
    <scope>X-RAY CRYSTALLOGRAPHY (1.75 ANGSTROMS) OF 1852-2082 IN COMPLEX WITH S-ADENOSYL-L-METHIONINE AND ZINC IONS</scope>
    <scope>FUNCTION</scope>
    <scope>CATALYTIC ACTIVITY</scope>
    <scope>MUTAGENESIS OF ARG-1914 AND ARG-1952</scope>
    <scope>CHARACTERIZATION OF SOTOS VARIANTS GLN-1984; GLN-2005 AND GLN-2017</scope>
</reference>
<reference key="17">
    <citation type="journal article" date="2003" name="Am. J. Hum. Genet.">
        <title>NSD1 mutations are the major cause of Sotos syndrome and occur in some cases of Weaver syndrome but are rare in other overgrowth phenotypes.</title>
        <authorList>
            <person name="Douglas J."/>
            <person name="Hanks S."/>
            <person name="Temple I.K."/>
            <person name="Davies S."/>
            <person name="Murray A."/>
            <person name="Upadhyaya M."/>
            <person name="Tomkins S."/>
            <person name="Hughes H.E."/>
            <person name="Cole T.R.P."/>
            <person name="Rahman N."/>
        </authorList>
    </citation>
    <scope>VARIANTS SOTOS LEU-1616; PRO-1637; TRP-1674; VAL-1792; ARG-1925; GLN-2005; GLN-2017; GLN-2143 AND SER-2183</scope>
    <scope>VARIANTS LEU-614; THR-691; PRO-726; PRO-1036; ILE-1091; ILE-2250 AND THR-2261</scope>
</reference>
<reference key="18">
    <citation type="journal article" date="2003" name="J. Med. Genet.">
        <title>Spectrum of NSD1 mutations in Sotos and Weaver syndromes.</title>
        <authorList>
            <person name="Rio M."/>
            <person name="Clech L."/>
            <person name="Amiel J."/>
            <person name="Faivre L."/>
            <person name="Lyonnet S."/>
            <person name="Le Merrer M."/>
            <person name="Odent S."/>
            <person name="Lacombe D."/>
            <person name="Edery P."/>
            <person name="Brauner R."/>
            <person name="Raoul O."/>
            <person name="Gosset P."/>
            <person name="Prieur M."/>
            <person name="Vekemans M."/>
            <person name="Munnich A."/>
            <person name="Colleaux L."/>
            <person name="Cormier-Daire V."/>
        </authorList>
    </citation>
    <scope>VARIANTS SOTOS ASN-1687; ASP-1955; GLN-1984; CYS-1997 AND TRP-2017</scope>
</reference>
<reference key="19">
    <citation type="journal article" date="2008" name="Nature">
        <title>DNA sequencing of a cytogenetically normal acute myeloid leukaemia genome.</title>
        <authorList>
            <person name="Ley T.J."/>
            <person name="Mardis E.R."/>
            <person name="Ding L."/>
            <person name="Fulton B."/>
            <person name="McLellan M.D."/>
            <person name="Chen K."/>
            <person name="Dooling D."/>
            <person name="Dunford-Shore B.H."/>
            <person name="McGrath S."/>
            <person name="Hickenbotham M."/>
            <person name="Cook L."/>
            <person name="Abbott R."/>
            <person name="Larson D.E."/>
            <person name="Koboldt D.C."/>
            <person name="Pohl C."/>
            <person name="Smith S."/>
            <person name="Hawkins A."/>
            <person name="Abbott S."/>
            <person name="Locke D."/>
            <person name="Hillier L.W."/>
            <person name="Miner T."/>
            <person name="Fulton L."/>
            <person name="Magrini V."/>
            <person name="Wylie T."/>
            <person name="Glasscock J."/>
            <person name="Conyers J."/>
            <person name="Sander N."/>
            <person name="Shi X."/>
            <person name="Osborne J.R."/>
            <person name="Minx P."/>
            <person name="Gordon D."/>
            <person name="Chinwalla A."/>
            <person name="Zhao Y."/>
            <person name="Ries R.E."/>
            <person name="Payton J.E."/>
            <person name="Westervelt P."/>
            <person name="Tomasson M.H."/>
            <person name="Watson M."/>
            <person name="Baty J."/>
            <person name="Ivanovich J."/>
            <person name="Heath S."/>
            <person name="Shannon W.D."/>
            <person name="Nagarajan R."/>
            <person name="Walter M.J."/>
            <person name="Link D.C."/>
            <person name="Graubert T.A."/>
            <person name="DiPersio J.F."/>
            <person name="Wilson R.K."/>
        </authorList>
    </citation>
    <scope>VARIANT [LARGE SCALE ANALYSIS] PRO-726</scope>
</reference>
<protein>
    <recommendedName>
        <fullName>Histone-lysine N-methyltransferase, H3 lysine-36 specific</fullName>
        <ecNumber evidence="16">2.1.1.357</ecNumber>
    </recommendedName>
    <alternativeName>
        <fullName>Androgen receptor coactivator 267 kDa protein</fullName>
    </alternativeName>
    <alternativeName>
        <fullName>Androgen receptor-associated protein of 267 kDa</fullName>
    </alternativeName>
    <alternativeName>
        <fullName>H3-K36-HMTase</fullName>
    </alternativeName>
    <alternativeName>
        <fullName>Lysine N-methyltransferase 3B</fullName>
    </alternativeName>
    <alternativeName>
        <fullName>Nuclear receptor-binding SET domain-containing protein 1</fullName>
        <shortName>NR-binding SET domain-containing protein</shortName>
    </alternativeName>
</protein>